<gene>
    <name evidence="1" type="primary">aroA</name>
    <name type="ordered locus">C8J_0832</name>
</gene>
<name>AROA_CAMJ8</name>
<accession>A8FLU4</accession>
<accession>P52312</accession>
<accession>Q0PA03</accession>
<accession>Q9PP36</accession>
<feature type="chain" id="PRO_0000315382" description="3-phosphoshikimate 1-carboxyvinyltransferase">
    <location>
        <begin position="1"/>
        <end position="428"/>
    </location>
</feature>
<feature type="active site" description="Proton acceptor" evidence="1">
    <location>
        <position position="313"/>
    </location>
</feature>
<feature type="binding site" evidence="1">
    <location>
        <position position="21"/>
    </location>
    <ligand>
        <name>3-phosphoshikimate</name>
        <dbReference type="ChEBI" id="CHEBI:145989"/>
    </ligand>
</feature>
<feature type="binding site" evidence="1">
    <location>
        <position position="21"/>
    </location>
    <ligand>
        <name>phosphoenolpyruvate</name>
        <dbReference type="ChEBI" id="CHEBI:58702"/>
    </ligand>
</feature>
<feature type="binding site" evidence="1">
    <location>
        <position position="22"/>
    </location>
    <ligand>
        <name>3-phosphoshikimate</name>
        <dbReference type="ChEBI" id="CHEBI:145989"/>
    </ligand>
</feature>
<feature type="binding site" evidence="1">
    <location>
        <position position="26"/>
    </location>
    <ligand>
        <name>3-phosphoshikimate</name>
        <dbReference type="ChEBI" id="CHEBI:145989"/>
    </ligand>
</feature>
<feature type="binding site" evidence="1">
    <location>
        <position position="91"/>
    </location>
    <ligand>
        <name>phosphoenolpyruvate</name>
        <dbReference type="ChEBI" id="CHEBI:58702"/>
    </ligand>
</feature>
<feature type="binding site" evidence="1">
    <location>
        <position position="119"/>
    </location>
    <ligand>
        <name>phosphoenolpyruvate</name>
        <dbReference type="ChEBI" id="CHEBI:58702"/>
    </ligand>
</feature>
<feature type="binding site" evidence="1">
    <location>
        <position position="164"/>
    </location>
    <ligand>
        <name>3-phosphoshikimate</name>
        <dbReference type="ChEBI" id="CHEBI:145989"/>
    </ligand>
</feature>
<feature type="binding site" evidence="1">
    <location>
        <position position="166"/>
    </location>
    <ligand>
        <name>3-phosphoshikimate</name>
        <dbReference type="ChEBI" id="CHEBI:145989"/>
    </ligand>
</feature>
<feature type="binding site" evidence="1">
    <location>
        <position position="166"/>
    </location>
    <ligand>
        <name>phosphoenolpyruvate</name>
        <dbReference type="ChEBI" id="CHEBI:58702"/>
    </ligand>
</feature>
<feature type="binding site" evidence="1">
    <location>
        <position position="313"/>
    </location>
    <ligand>
        <name>3-phosphoshikimate</name>
        <dbReference type="ChEBI" id="CHEBI:145989"/>
    </ligand>
</feature>
<feature type="binding site" evidence="1">
    <location>
        <position position="340"/>
    </location>
    <ligand>
        <name>3-phosphoshikimate</name>
        <dbReference type="ChEBI" id="CHEBI:145989"/>
    </ligand>
</feature>
<feature type="binding site" evidence="1">
    <location>
        <position position="344"/>
    </location>
    <ligand>
        <name>phosphoenolpyruvate</name>
        <dbReference type="ChEBI" id="CHEBI:58702"/>
    </ligand>
</feature>
<feature type="binding site" evidence="1">
    <location>
        <position position="386"/>
    </location>
    <ligand>
        <name>phosphoenolpyruvate</name>
        <dbReference type="ChEBI" id="CHEBI:58702"/>
    </ligand>
</feature>
<comment type="function">
    <text evidence="1">Catalyzes the transfer of the enolpyruvyl moiety of phosphoenolpyruvate (PEP) to the 5-hydroxyl of shikimate-3-phosphate (S3P) to produce enolpyruvyl shikimate-3-phosphate and inorganic phosphate.</text>
</comment>
<comment type="catalytic activity">
    <reaction evidence="1">
        <text>3-phosphoshikimate + phosphoenolpyruvate = 5-O-(1-carboxyvinyl)-3-phosphoshikimate + phosphate</text>
        <dbReference type="Rhea" id="RHEA:21256"/>
        <dbReference type="ChEBI" id="CHEBI:43474"/>
        <dbReference type="ChEBI" id="CHEBI:57701"/>
        <dbReference type="ChEBI" id="CHEBI:58702"/>
        <dbReference type="ChEBI" id="CHEBI:145989"/>
        <dbReference type="EC" id="2.5.1.19"/>
    </reaction>
    <physiologicalReaction direction="left-to-right" evidence="1">
        <dbReference type="Rhea" id="RHEA:21257"/>
    </physiologicalReaction>
</comment>
<comment type="pathway">
    <text evidence="1">Metabolic intermediate biosynthesis; chorismate biosynthesis; chorismate from D-erythrose 4-phosphate and phosphoenolpyruvate: step 6/7.</text>
</comment>
<comment type="subunit">
    <text evidence="1">Monomer.</text>
</comment>
<comment type="subcellular location">
    <subcellularLocation>
        <location evidence="1">Cytoplasm</location>
    </subcellularLocation>
</comment>
<comment type="similarity">
    <text evidence="1 2">Belongs to the EPSP synthase family.</text>
</comment>
<comment type="sequence caution" evidence="2">
    <conflict type="erroneous initiation">
        <sequence resource="EMBL-CDS" id="ABV52431"/>
    </conflict>
    <text>Truncated N-terminus.</text>
</comment>
<sequence length="428" mass="47204">MKIYKLQTPVNAILENIAADKSISHRFAIFSLLTQEENKAQNYLLAQDTLNTLEIIKNLGAKIEQKDSCVKIIPPKEILSPNCILDCGNSGTAMRLMIGFLAGISGFFVLSGDKYLNNRPMRRISKPLTQIGARIYGRNEANLAPLCIEGQNLKAFNYKSEISSAQVKTAMILSAFRANNVCAFSEISLSRNHSENMLKAMKAPIRVSNDGLSLEISPLKKPLKAQNIIIPNDPSSAFYFALAAIILPKSQIILKNILLNPTRIEAYKILQKMGAKLEMTITQNDFETIGEIRVESSKLNGIEVKDNIAWLIDEAPALAIAFALAKGKSSLINAKELRVKESDRIAVMVENLKLCGVEARELDDGFEIEGGCELKSSKIKSYGDHRIAMSFAILGLLCGIEIDDSDCIKTSFPNFIEILSNLGARIDY</sequence>
<organism>
    <name type="scientific">Campylobacter jejuni subsp. jejuni serotype O:6 (strain 81116 / NCTC 11828)</name>
    <dbReference type="NCBI Taxonomy" id="407148"/>
    <lineage>
        <taxon>Bacteria</taxon>
        <taxon>Pseudomonadati</taxon>
        <taxon>Campylobacterota</taxon>
        <taxon>Epsilonproteobacteria</taxon>
        <taxon>Campylobacterales</taxon>
        <taxon>Campylobacteraceae</taxon>
        <taxon>Campylobacter</taxon>
    </lineage>
</organism>
<dbReference type="EC" id="2.5.1.19" evidence="1"/>
<dbReference type="EMBL" id="X89371">
    <property type="protein sequence ID" value="CAA61554.1"/>
    <property type="molecule type" value="Genomic_DNA"/>
</dbReference>
<dbReference type="EMBL" id="CP000814">
    <property type="protein sequence ID" value="ABV52431.1"/>
    <property type="status" value="ALT_INIT"/>
    <property type="molecule type" value="Genomic_DNA"/>
</dbReference>
<dbReference type="PIR" id="JC5338">
    <property type="entry name" value="JC5338"/>
</dbReference>
<dbReference type="RefSeq" id="WP_002865918.1">
    <property type="nucleotide sequence ID" value="NC_009839.1"/>
</dbReference>
<dbReference type="SMR" id="A8FLU4"/>
<dbReference type="KEGG" id="cju:C8J_0832"/>
<dbReference type="HOGENOM" id="CLU_024321_0_1_7"/>
<dbReference type="UniPathway" id="UPA00053">
    <property type="reaction ID" value="UER00089"/>
</dbReference>
<dbReference type="GO" id="GO:0005737">
    <property type="term" value="C:cytoplasm"/>
    <property type="evidence" value="ECO:0007669"/>
    <property type="project" value="UniProtKB-SubCell"/>
</dbReference>
<dbReference type="GO" id="GO:0003866">
    <property type="term" value="F:3-phosphoshikimate 1-carboxyvinyltransferase activity"/>
    <property type="evidence" value="ECO:0007669"/>
    <property type="project" value="UniProtKB-UniRule"/>
</dbReference>
<dbReference type="GO" id="GO:0008652">
    <property type="term" value="P:amino acid biosynthetic process"/>
    <property type="evidence" value="ECO:0007669"/>
    <property type="project" value="UniProtKB-KW"/>
</dbReference>
<dbReference type="GO" id="GO:0009073">
    <property type="term" value="P:aromatic amino acid family biosynthetic process"/>
    <property type="evidence" value="ECO:0007669"/>
    <property type="project" value="UniProtKB-KW"/>
</dbReference>
<dbReference type="GO" id="GO:0009423">
    <property type="term" value="P:chorismate biosynthetic process"/>
    <property type="evidence" value="ECO:0007669"/>
    <property type="project" value="UniProtKB-UniRule"/>
</dbReference>
<dbReference type="CDD" id="cd01556">
    <property type="entry name" value="EPSP_synthase"/>
    <property type="match status" value="1"/>
</dbReference>
<dbReference type="FunFam" id="3.65.10.10:FF:000005">
    <property type="entry name" value="3-phosphoshikimate 1-carboxyvinyltransferase"/>
    <property type="match status" value="1"/>
</dbReference>
<dbReference type="Gene3D" id="3.65.10.10">
    <property type="entry name" value="Enolpyruvate transferase domain"/>
    <property type="match status" value="2"/>
</dbReference>
<dbReference type="HAMAP" id="MF_00210">
    <property type="entry name" value="EPSP_synth"/>
    <property type="match status" value="1"/>
</dbReference>
<dbReference type="InterPro" id="IPR001986">
    <property type="entry name" value="Enolpyruvate_Tfrase_dom"/>
</dbReference>
<dbReference type="InterPro" id="IPR036968">
    <property type="entry name" value="Enolpyruvate_Tfrase_sf"/>
</dbReference>
<dbReference type="InterPro" id="IPR006264">
    <property type="entry name" value="EPSP_synthase"/>
</dbReference>
<dbReference type="InterPro" id="IPR023193">
    <property type="entry name" value="EPSP_synthase_CS"/>
</dbReference>
<dbReference type="InterPro" id="IPR013792">
    <property type="entry name" value="RNA3'P_cycl/enolpyr_Trfase_a/b"/>
</dbReference>
<dbReference type="NCBIfam" id="TIGR01356">
    <property type="entry name" value="aroA"/>
    <property type="match status" value="1"/>
</dbReference>
<dbReference type="PANTHER" id="PTHR21090">
    <property type="entry name" value="AROM/DEHYDROQUINATE SYNTHASE"/>
    <property type="match status" value="1"/>
</dbReference>
<dbReference type="PANTHER" id="PTHR21090:SF5">
    <property type="entry name" value="PENTAFUNCTIONAL AROM POLYPEPTIDE"/>
    <property type="match status" value="1"/>
</dbReference>
<dbReference type="Pfam" id="PF00275">
    <property type="entry name" value="EPSP_synthase"/>
    <property type="match status" value="1"/>
</dbReference>
<dbReference type="PIRSF" id="PIRSF000505">
    <property type="entry name" value="EPSPS"/>
    <property type="match status" value="1"/>
</dbReference>
<dbReference type="SUPFAM" id="SSF55205">
    <property type="entry name" value="EPT/RTPC-like"/>
    <property type="match status" value="1"/>
</dbReference>
<dbReference type="PROSITE" id="PS00104">
    <property type="entry name" value="EPSP_SYNTHASE_1"/>
    <property type="match status" value="1"/>
</dbReference>
<dbReference type="PROSITE" id="PS00885">
    <property type="entry name" value="EPSP_SYNTHASE_2"/>
    <property type="match status" value="1"/>
</dbReference>
<keyword id="KW-0028">Amino-acid biosynthesis</keyword>
<keyword id="KW-0057">Aromatic amino acid biosynthesis</keyword>
<keyword id="KW-0963">Cytoplasm</keyword>
<keyword id="KW-0808">Transferase</keyword>
<evidence type="ECO:0000255" key="1">
    <source>
        <dbReference type="HAMAP-Rule" id="MF_00210"/>
    </source>
</evidence>
<evidence type="ECO:0000305" key="2"/>
<protein>
    <recommendedName>
        <fullName evidence="1">3-phosphoshikimate 1-carboxyvinyltransferase</fullName>
        <ecNumber evidence="1">2.5.1.19</ecNumber>
    </recommendedName>
    <alternativeName>
        <fullName evidence="1">5-enolpyruvylshikimate-3-phosphate synthase</fullName>
        <shortName evidence="1">EPSP synthase</shortName>
        <shortName evidence="1">EPSPS</shortName>
    </alternativeName>
</protein>
<reference key="1">
    <citation type="journal article" date="1996" name="Gene">
        <title>The aroA gene of Campylobacter jejuni.</title>
        <authorList>
            <person name="Woesten M.M.S.M."/>
            <person name="Dubbink V.H.J."/>
            <person name="van der Zeijst B.A.M."/>
        </authorList>
    </citation>
    <scope>NUCLEOTIDE SEQUENCE [GENOMIC DNA]</scope>
</reference>
<reference key="2">
    <citation type="journal article" date="2007" name="J. Bacteriol.">
        <title>The complete genome sequence of Campylobacter jejuni strain 81116 (NCTC11828).</title>
        <authorList>
            <person name="Pearson B.M."/>
            <person name="Gaskin D.J.H."/>
            <person name="Segers R.P.A.M."/>
            <person name="Wells J.M."/>
            <person name="Nuijten P.J.M."/>
            <person name="van Vliet A.H.M."/>
        </authorList>
    </citation>
    <scope>NUCLEOTIDE SEQUENCE [LARGE SCALE GENOMIC DNA]</scope>
    <source>
        <strain>81116 / NCTC 11828</strain>
    </source>
</reference>
<proteinExistence type="inferred from homology"/>